<organism>
    <name type="scientific">Schizosaccharomyces pombe (strain 972 / ATCC 24843)</name>
    <name type="common">Fission yeast</name>
    <dbReference type="NCBI Taxonomy" id="284812"/>
    <lineage>
        <taxon>Eukaryota</taxon>
        <taxon>Fungi</taxon>
        <taxon>Dikarya</taxon>
        <taxon>Ascomycota</taxon>
        <taxon>Taphrinomycotina</taxon>
        <taxon>Schizosaccharomycetes</taxon>
        <taxon>Schizosaccharomycetales</taxon>
        <taxon>Schizosaccharomycetaceae</taxon>
        <taxon>Schizosaccharomyces</taxon>
    </lineage>
</organism>
<gene>
    <name type="primary">puc1</name>
    <name type="ORF">SPBC19F5.01c</name>
    <name type="ORF">SPBP8B7.32c</name>
</gene>
<reference key="1">
    <citation type="journal article" date="1991" name="Nature">
        <title>Identification of a G1-type cyclin puc1+ in the fission yeast Schizosaccharomyces pombe.</title>
        <authorList>
            <person name="Forsburg S.L."/>
            <person name="Nurse P."/>
        </authorList>
    </citation>
    <scope>NUCLEOTIDE SEQUENCE [GENOMIC DNA]</scope>
</reference>
<reference key="2">
    <citation type="journal article" date="1991" name="Nature">
        <authorList>
            <person name="Forsburg S.L."/>
            <person name="Nurse P."/>
        </authorList>
    </citation>
    <scope>ERRATUM OF PUBMED:1828291</scope>
</reference>
<reference key="3">
    <citation type="journal article" date="1994" name="J. Cell Sci.">
        <title>Analysis of the Schizosaccharomyces pombe cyclin puc1: evidence for a role in cell cycle exit.</title>
        <authorList>
            <person name="Forsburg S.L."/>
            <person name="Nurse P."/>
        </authorList>
    </citation>
    <scope>NUCLEOTIDE SEQUENCE [GENOMIC DNA]</scope>
</reference>
<reference key="4">
    <citation type="journal article" date="2002" name="Nature">
        <title>The genome sequence of Schizosaccharomyces pombe.</title>
        <authorList>
            <person name="Wood V."/>
            <person name="Gwilliam R."/>
            <person name="Rajandream M.A."/>
            <person name="Lyne M.H."/>
            <person name="Lyne R."/>
            <person name="Stewart A."/>
            <person name="Sgouros J.G."/>
            <person name="Peat N."/>
            <person name="Hayles J."/>
            <person name="Baker S.G."/>
            <person name="Basham D."/>
            <person name="Bowman S."/>
            <person name="Brooks K."/>
            <person name="Brown D."/>
            <person name="Brown S."/>
            <person name="Chillingworth T."/>
            <person name="Churcher C.M."/>
            <person name="Collins M."/>
            <person name="Connor R."/>
            <person name="Cronin A."/>
            <person name="Davis P."/>
            <person name="Feltwell T."/>
            <person name="Fraser A."/>
            <person name="Gentles S."/>
            <person name="Goble A."/>
            <person name="Hamlin N."/>
            <person name="Harris D.E."/>
            <person name="Hidalgo J."/>
            <person name="Hodgson G."/>
            <person name="Holroyd S."/>
            <person name="Hornsby T."/>
            <person name="Howarth S."/>
            <person name="Huckle E.J."/>
            <person name="Hunt S."/>
            <person name="Jagels K."/>
            <person name="James K.D."/>
            <person name="Jones L."/>
            <person name="Jones M."/>
            <person name="Leather S."/>
            <person name="McDonald S."/>
            <person name="McLean J."/>
            <person name="Mooney P."/>
            <person name="Moule S."/>
            <person name="Mungall K.L."/>
            <person name="Murphy L.D."/>
            <person name="Niblett D."/>
            <person name="Odell C."/>
            <person name="Oliver K."/>
            <person name="O'Neil S."/>
            <person name="Pearson D."/>
            <person name="Quail M.A."/>
            <person name="Rabbinowitsch E."/>
            <person name="Rutherford K.M."/>
            <person name="Rutter S."/>
            <person name="Saunders D."/>
            <person name="Seeger K."/>
            <person name="Sharp S."/>
            <person name="Skelton J."/>
            <person name="Simmonds M.N."/>
            <person name="Squares R."/>
            <person name="Squares S."/>
            <person name="Stevens K."/>
            <person name="Taylor K."/>
            <person name="Taylor R.G."/>
            <person name="Tivey A."/>
            <person name="Walsh S.V."/>
            <person name="Warren T."/>
            <person name="Whitehead S."/>
            <person name="Woodward J.R."/>
            <person name="Volckaert G."/>
            <person name="Aert R."/>
            <person name="Robben J."/>
            <person name="Grymonprez B."/>
            <person name="Weltjens I."/>
            <person name="Vanstreels E."/>
            <person name="Rieger M."/>
            <person name="Schaefer M."/>
            <person name="Mueller-Auer S."/>
            <person name="Gabel C."/>
            <person name="Fuchs M."/>
            <person name="Duesterhoeft A."/>
            <person name="Fritzc C."/>
            <person name="Holzer E."/>
            <person name="Moestl D."/>
            <person name="Hilbert H."/>
            <person name="Borzym K."/>
            <person name="Langer I."/>
            <person name="Beck A."/>
            <person name="Lehrach H."/>
            <person name="Reinhardt R."/>
            <person name="Pohl T.M."/>
            <person name="Eger P."/>
            <person name="Zimmermann W."/>
            <person name="Wedler H."/>
            <person name="Wambutt R."/>
            <person name="Purnelle B."/>
            <person name="Goffeau A."/>
            <person name="Cadieu E."/>
            <person name="Dreano S."/>
            <person name="Gloux S."/>
            <person name="Lelaure V."/>
            <person name="Mottier S."/>
            <person name="Galibert F."/>
            <person name="Aves S.J."/>
            <person name="Xiang Z."/>
            <person name="Hunt C."/>
            <person name="Moore K."/>
            <person name="Hurst S.M."/>
            <person name="Lucas M."/>
            <person name="Rochet M."/>
            <person name="Gaillardin C."/>
            <person name="Tallada V.A."/>
            <person name="Garzon A."/>
            <person name="Thode G."/>
            <person name="Daga R.R."/>
            <person name="Cruzado L."/>
            <person name="Jimenez J."/>
            <person name="Sanchez M."/>
            <person name="del Rey F."/>
            <person name="Benito J."/>
            <person name="Dominguez A."/>
            <person name="Revuelta J.L."/>
            <person name="Moreno S."/>
            <person name="Armstrong J."/>
            <person name="Forsburg S.L."/>
            <person name="Cerutti L."/>
            <person name="Lowe T."/>
            <person name="McCombie W.R."/>
            <person name="Paulsen I."/>
            <person name="Potashkin J."/>
            <person name="Shpakovski G.V."/>
            <person name="Ussery D."/>
            <person name="Barrell B.G."/>
            <person name="Nurse P."/>
        </authorList>
    </citation>
    <scope>NUCLEOTIDE SEQUENCE [LARGE SCALE GENOMIC DNA]</scope>
    <source>
        <strain>972 / ATCC 24843</strain>
    </source>
</reference>
<name>PUC1_SCHPO</name>
<feature type="chain" id="PRO_0000080418" description="Cyclin puc1">
    <location>
        <begin position="1"/>
        <end position="359"/>
    </location>
</feature>
<keyword id="KW-0131">Cell cycle</keyword>
<keyword id="KW-0132">Cell division</keyword>
<keyword id="KW-0195">Cyclin</keyword>
<keyword id="KW-1185">Reference proteome</keyword>
<dbReference type="EMBL" id="X59154">
    <property type="protein sequence ID" value="CAA41868.1"/>
    <property type="molecule type" value="Genomic_DNA"/>
</dbReference>
<dbReference type="EMBL" id="X74451">
    <property type="protein sequence ID" value="CAA52460.1"/>
    <property type="molecule type" value="Genomic_DNA"/>
</dbReference>
<dbReference type="EMBL" id="CU329671">
    <property type="protein sequence ID" value="CAA21817.1"/>
    <property type="molecule type" value="Genomic_DNA"/>
</dbReference>
<dbReference type="PIR" id="S15406">
    <property type="entry name" value="S15406"/>
</dbReference>
<dbReference type="PIR" id="S36408">
    <property type="entry name" value="S36408"/>
</dbReference>
<dbReference type="RefSeq" id="NP_596539.1">
    <property type="nucleotide sequence ID" value="NM_001022460.2"/>
</dbReference>
<dbReference type="SMR" id="P25009"/>
<dbReference type="BioGRID" id="277179">
    <property type="interactions" value="23"/>
</dbReference>
<dbReference type="DIP" id="DIP-659N"/>
<dbReference type="FunCoup" id="P25009">
    <property type="interactions" value="41"/>
</dbReference>
<dbReference type="STRING" id="284812.P25009"/>
<dbReference type="iPTMnet" id="P25009"/>
<dbReference type="PaxDb" id="4896-SPBC19F5.01c.1"/>
<dbReference type="EnsemblFungi" id="SPBC19F5.01c.1">
    <property type="protein sequence ID" value="SPBC19F5.01c.1:pep"/>
    <property type="gene ID" value="SPBC19F5.01c"/>
</dbReference>
<dbReference type="PomBase" id="SPBC19F5.01c">
    <property type="gene designation" value="puc1"/>
</dbReference>
<dbReference type="VEuPathDB" id="FungiDB:SPBC19F5.01c"/>
<dbReference type="eggNOG" id="KOG0653">
    <property type="taxonomic scope" value="Eukaryota"/>
</dbReference>
<dbReference type="HOGENOM" id="CLU_771972_0_0_1"/>
<dbReference type="InParanoid" id="P25009"/>
<dbReference type="PhylomeDB" id="P25009"/>
<dbReference type="PRO" id="PR:P25009"/>
<dbReference type="Proteomes" id="UP000002485">
    <property type="component" value="Chromosome II"/>
</dbReference>
<dbReference type="GO" id="GO:0000307">
    <property type="term" value="C:cyclin-dependent protein kinase holoenzyme complex"/>
    <property type="evidence" value="ECO:0000318"/>
    <property type="project" value="GO_Central"/>
</dbReference>
<dbReference type="GO" id="GO:0005737">
    <property type="term" value="C:cytoplasm"/>
    <property type="evidence" value="ECO:0000318"/>
    <property type="project" value="GO_Central"/>
</dbReference>
<dbReference type="GO" id="GO:0005829">
    <property type="term" value="C:cytosol"/>
    <property type="evidence" value="ECO:0007005"/>
    <property type="project" value="PomBase"/>
</dbReference>
<dbReference type="GO" id="GO:0005634">
    <property type="term" value="C:nucleus"/>
    <property type="evidence" value="ECO:0007005"/>
    <property type="project" value="PomBase"/>
</dbReference>
<dbReference type="GO" id="GO:0016538">
    <property type="term" value="F:cyclin-dependent protein serine/threonine kinase regulator activity"/>
    <property type="evidence" value="ECO:0000316"/>
    <property type="project" value="PomBase"/>
</dbReference>
<dbReference type="GO" id="GO:0044843">
    <property type="term" value="P:cell cycle G1/S phase transition"/>
    <property type="evidence" value="ECO:0000315"/>
    <property type="project" value="PomBase"/>
</dbReference>
<dbReference type="GO" id="GO:0051301">
    <property type="term" value="P:cell division"/>
    <property type="evidence" value="ECO:0007669"/>
    <property type="project" value="UniProtKB-KW"/>
</dbReference>
<dbReference type="GO" id="GO:0000082">
    <property type="term" value="P:G1/S transition of mitotic cell cycle"/>
    <property type="evidence" value="ECO:0000318"/>
    <property type="project" value="GO_Central"/>
</dbReference>
<dbReference type="GO" id="GO:0110045">
    <property type="term" value="P:negative regulation of cell cycle switching, mitotic to meiotic cell cycle"/>
    <property type="evidence" value="ECO:0000316"/>
    <property type="project" value="PomBase"/>
</dbReference>
<dbReference type="GO" id="GO:1900087">
    <property type="term" value="P:positive regulation of G1/S transition of mitotic cell cycle"/>
    <property type="evidence" value="ECO:0000269"/>
    <property type="project" value="PomBase"/>
</dbReference>
<dbReference type="GO" id="GO:2000045">
    <property type="term" value="P:regulation of G1/S transition of mitotic cell cycle"/>
    <property type="evidence" value="ECO:0000316"/>
    <property type="project" value="PomBase"/>
</dbReference>
<dbReference type="GO" id="GO:0023052">
    <property type="term" value="P:signaling"/>
    <property type="evidence" value="ECO:0000303"/>
    <property type="project" value="PomBase"/>
</dbReference>
<dbReference type="CDD" id="cd20559">
    <property type="entry name" value="CYCLIN_ScCLN_like"/>
    <property type="match status" value="1"/>
</dbReference>
<dbReference type="FunFam" id="1.10.472.10:FF:000010">
    <property type="entry name" value="G1/S-specific cyclin Cln1"/>
    <property type="match status" value="1"/>
</dbReference>
<dbReference type="Gene3D" id="1.10.472.10">
    <property type="entry name" value="Cyclin-like"/>
    <property type="match status" value="2"/>
</dbReference>
<dbReference type="InterPro" id="IPR039361">
    <property type="entry name" value="Cyclin"/>
</dbReference>
<dbReference type="InterPro" id="IPR013763">
    <property type="entry name" value="Cyclin-like_dom"/>
</dbReference>
<dbReference type="InterPro" id="IPR036915">
    <property type="entry name" value="Cyclin-like_sf"/>
</dbReference>
<dbReference type="InterPro" id="IPR014399">
    <property type="entry name" value="Cyclin_CLN"/>
</dbReference>
<dbReference type="InterPro" id="IPR006671">
    <property type="entry name" value="Cyclin_N"/>
</dbReference>
<dbReference type="PANTHER" id="PTHR10177">
    <property type="entry name" value="CYCLINS"/>
    <property type="match status" value="1"/>
</dbReference>
<dbReference type="Pfam" id="PF00134">
    <property type="entry name" value="Cyclin_N"/>
    <property type="match status" value="1"/>
</dbReference>
<dbReference type="PIRSF" id="PIRSF001770">
    <property type="entry name" value="Cyclin_CLN"/>
    <property type="match status" value="1"/>
</dbReference>
<dbReference type="SMART" id="SM00385">
    <property type="entry name" value="CYCLIN"/>
    <property type="match status" value="1"/>
</dbReference>
<dbReference type="SUPFAM" id="SSF47954">
    <property type="entry name" value="Cyclin-like"/>
    <property type="match status" value="1"/>
</dbReference>
<sequence>MLVSSNEEQLTAHTPTSSSSIEPKILAACSYSLSVGPCSLAVSPKGVNSKSPSLKNETAFVVDSVSTLSAESSALLYNTQSSLLTGLSMNGYLGEYQEDIIHHLITREKNFLLNVHLSNQQPELRWSMRPALVNFIVEIHNGFDLSIDTLPLSISLMDSYVSRRVVYCKHIQLVACVCLWIASKFHETEDRVPLLQELKLACKNIYAEDLFIRMERHILDTLDWDISIPTPASYIPVLDPIFFLVLDASMFVPNLFKFPASKIACSVMNIVNEHVGSFLLTHPSMESYRKDDNFLWPEDLDTVTSYMENMSKRYANEECTDLLFSSLGRISSILAKKYPEQCAMAAWCNMTEKDTERTL</sequence>
<comment type="function">
    <text>Function in exit from the mitotic cycle. Contributes to negative regulation of the timing of sexual development in fission yeast, and functions at the transition between cycling and non-cycling cells. Interacts with protein kinase A.</text>
</comment>
<comment type="similarity">
    <text evidence="1">Belongs to the cyclin family.</text>
</comment>
<evidence type="ECO:0000305" key="1"/>
<proteinExistence type="inferred from homology"/>
<protein>
    <recommendedName>
        <fullName>Cyclin puc1</fullName>
    </recommendedName>
</protein>
<accession>P25009</accession>